<protein>
    <recommendedName>
        <fullName>6-methylsalicylic acid synthase</fullName>
        <shortName>6-MSAS</shortName>
        <ecNumber>2.3.1.165</ecNumber>
    </recommendedName>
</protein>
<organism>
    <name type="scientific">Penicillium patulum</name>
    <name type="common">Penicillium griseofulvum</name>
    <dbReference type="NCBI Taxonomy" id="5078"/>
    <lineage>
        <taxon>Eukaryota</taxon>
        <taxon>Fungi</taxon>
        <taxon>Dikarya</taxon>
        <taxon>Ascomycota</taxon>
        <taxon>Pezizomycotina</taxon>
        <taxon>Eurotiomycetes</taxon>
        <taxon>Eurotiomycetidae</taxon>
        <taxon>Eurotiales</taxon>
        <taxon>Aspergillaceae</taxon>
        <taxon>Penicillium</taxon>
    </lineage>
</organism>
<accession>P22367</accession>
<dbReference type="EC" id="2.3.1.165"/>
<dbReference type="EMBL" id="X55776">
    <property type="protein sequence ID" value="CAA39295.1"/>
    <property type="molecule type" value="Genomic_DNA"/>
</dbReference>
<dbReference type="PIR" id="S13178">
    <property type="entry name" value="S13178"/>
</dbReference>
<dbReference type="RefSeq" id="XP_040649541.1">
    <property type="nucleotide sequence ID" value="XM_040794291.1"/>
</dbReference>
<dbReference type="SMR" id="P22367"/>
<dbReference type="GeneID" id="63709591"/>
<dbReference type="KEGG" id="ag:CAA39295"/>
<dbReference type="OMA" id="SWVTHTT"/>
<dbReference type="OrthoDB" id="329835at2759"/>
<dbReference type="BioCyc" id="MetaCyc:MONOMER-9061"/>
<dbReference type="BRENDA" id="2.3.1.165">
    <property type="organism ID" value="4632"/>
</dbReference>
<dbReference type="UniPathway" id="UPA00918"/>
<dbReference type="GO" id="GO:0004315">
    <property type="term" value="F:3-oxoacyl-[acyl-carrier-protein] synthase activity"/>
    <property type="evidence" value="ECO:0007669"/>
    <property type="project" value="InterPro"/>
</dbReference>
<dbReference type="GO" id="GO:0050641">
    <property type="term" value="F:6-methylsalicylic acid synthase activity"/>
    <property type="evidence" value="ECO:0007669"/>
    <property type="project" value="UniProtKB-EC"/>
</dbReference>
<dbReference type="GO" id="GO:0004312">
    <property type="term" value="F:fatty acid synthase activity"/>
    <property type="evidence" value="ECO:0007669"/>
    <property type="project" value="TreeGrafter"/>
</dbReference>
<dbReference type="GO" id="GO:0031177">
    <property type="term" value="F:phosphopantetheine binding"/>
    <property type="evidence" value="ECO:0007669"/>
    <property type="project" value="InterPro"/>
</dbReference>
<dbReference type="GO" id="GO:0017000">
    <property type="term" value="P:antibiotic biosynthetic process"/>
    <property type="evidence" value="ECO:0007669"/>
    <property type="project" value="UniProtKB-KW"/>
</dbReference>
<dbReference type="GO" id="GO:0006633">
    <property type="term" value="P:fatty acid biosynthetic process"/>
    <property type="evidence" value="ECO:0007669"/>
    <property type="project" value="InterPro"/>
</dbReference>
<dbReference type="GO" id="GO:1901336">
    <property type="term" value="P:lactone biosynthetic process"/>
    <property type="evidence" value="ECO:0007669"/>
    <property type="project" value="UniProtKB-ARBA"/>
</dbReference>
<dbReference type="GO" id="GO:0030639">
    <property type="term" value="P:polyketide biosynthetic process"/>
    <property type="evidence" value="ECO:0007669"/>
    <property type="project" value="UniProtKB-ARBA"/>
</dbReference>
<dbReference type="CDD" id="cd05274">
    <property type="entry name" value="KR_FAS_SDR_x"/>
    <property type="match status" value="1"/>
</dbReference>
<dbReference type="CDD" id="cd00833">
    <property type="entry name" value="PKS"/>
    <property type="match status" value="1"/>
</dbReference>
<dbReference type="Gene3D" id="3.30.70.3290">
    <property type="match status" value="1"/>
</dbReference>
<dbReference type="Gene3D" id="3.40.47.10">
    <property type="match status" value="1"/>
</dbReference>
<dbReference type="Gene3D" id="1.10.1200.10">
    <property type="entry name" value="ACP-like"/>
    <property type="match status" value="1"/>
</dbReference>
<dbReference type="Gene3D" id="3.40.366.10">
    <property type="entry name" value="Malonyl-Coenzyme A Acyl Carrier Protein, domain 2"/>
    <property type="match status" value="1"/>
</dbReference>
<dbReference type="Gene3D" id="3.40.50.720">
    <property type="entry name" value="NAD(P)-binding Rossmann-like Domain"/>
    <property type="match status" value="1"/>
</dbReference>
<dbReference type="Gene3D" id="3.10.129.110">
    <property type="entry name" value="Polyketide synthase dehydratase"/>
    <property type="match status" value="1"/>
</dbReference>
<dbReference type="InterPro" id="IPR001227">
    <property type="entry name" value="Ac_transferase_dom_sf"/>
</dbReference>
<dbReference type="InterPro" id="IPR036736">
    <property type="entry name" value="ACP-like_sf"/>
</dbReference>
<dbReference type="InterPro" id="IPR014043">
    <property type="entry name" value="Acyl_transferase_dom"/>
</dbReference>
<dbReference type="InterPro" id="IPR016035">
    <property type="entry name" value="Acyl_Trfase/lysoPLipase"/>
</dbReference>
<dbReference type="InterPro" id="IPR018201">
    <property type="entry name" value="Ketoacyl_synth_AS"/>
</dbReference>
<dbReference type="InterPro" id="IPR014031">
    <property type="entry name" value="Ketoacyl_synth_C"/>
</dbReference>
<dbReference type="InterPro" id="IPR014030">
    <property type="entry name" value="Ketoacyl_synth_N"/>
</dbReference>
<dbReference type="InterPro" id="IPR016036">
    <property type="entry name" value="Malonyl_transacylase_ACP-bd"/>
</dbReference>
<dbReference type="InterPro" id="IPR036291">
    <property type="entry name" value="NAD(P)-bd_dom_sf"/>
</dbReference>
<dbReference type="InterPro" id="IPR032821">
    <property type="entry name" value="PKS_assoc"/>
</dbReference>
<dbReference type="InterPro" id="IPR020841">
    <property type="entry name" value="PKS_Beta-ketoAc_synthase_dom"/>
</dbReference>
<dbReference type="InterPro" id="IPR042104">
    <property type="entry name" value="PKS_dehydratase_sf"/>
</dbReference>
<dbReference type="InterPro" id="IPR020807">
    <property type="entry name" value="PKS_DH"/>
</dbReference>
<dbReference type="InterPro" id="IPR049552">
    <property type="entry name" value="PKS_DH_N"/>
</dbReference>
<dbReference type="InterPro" id="IPR013968">
    <property type="entry name" value="PKS_KR"/>
</dbReference>
<dbReference type="InterPro" id="IPR049900">
    <property type="entry name" value="PKS_mFAS_DH"/>
</dbReference>
<dbReference type="InterPro" id="IPR050091">
    <property type="entry name" value="PKS_NRPS_Biosynth_Enz"/>
</dbReference>
<dbReference type="InterPro" id="IPR020806">
    <property type="entry name" value="PKS_PP-bd"/>
</dbReference>
<dbReference type="InterPro" id="IPR009081">
    <property type="entry name" value="PP-bd_ACP"/>
</dbReference>
<dbReference type="InterPro" id="IPR006162">
    <property type="entry name" value="Ppantetheine_attach_site"/>
</dbReference>
<dbReference type="InterPro" id="IPR016039">
    <property type="entry name" value="Thiolase-like"/>
</dbReference>
<dbReference type="PANTHER" id="PTHR43775">
    <property type="entry name" value="FATTY ACID SYNTHASE"/>
    <property type="match status" value="1"/>
</dbReference>
<dbReference type="PANTHER" id="PTHR43775:SF22">
    <property type="entry name" value="SYNTHASE, PUTATIVE (JCVI)-RELATED"/>
    <property type="match status" value="1"/>
</dbReference>
<dbReference type="Pfam" id="PF00698">
    <property type="entry name" value="Acyl_transf_1"/>
    <property type="match status" value="1"/>
</dbReference>
<dbReference type="Pfam" id="PF16197">
    <property type="entry name" value="KAsynt_C_assoc"/>
    <property type="match status" value="1"/>
</dbReference>
<dbReference type="Pfam" id="PF00109">
    <property type="entry name" value="ketoacyl-synt"/>
    <property type="match status" value="1"/>
</dbReference>
<dbReference type="Pfam" id="PF02801">
    <property type="entry name" value="Ketoacyl-synt_C"/>
    <property type="match status" value="1"/>
</dbReference>
<dbReference type="Pfam" id="PF08659">
    <property type="entry name" value="KR"/>
    <property type="match status" value="1"/>
</dbReference>
<dbReference type="Pfam" id="PF21089">
    <property type="entry name" value="PKS_DH_N"/>
    <property type="match status" value="1"/>
</dbReference>
<dbReference type="Pfam" id="PF00550">
    <property type="entry name" value="PP-binding"/>
    <property type="match status" value="1"/>
</dbReference>
<dbReference type="SMART" id="SM00827">
    <property type="entry name" value="PKS_AT"/>
    <property type="match status" value="1"/>
</dbReference>
<dbReference type="SMART" id="SM00826">
    <property type="entry name" value="PKS_DH"/>
    <property type="match status" value="1"/>
</dbReference>
<dbReference type="SMART" id="SM00822">
    <property type="entry name" value="PKS_KR"/>
    <property type="match status" value="1"/>
</dbReference>
<dbReference type="SMART" id="SM00825">
    <property type="entry name" value="PKS_KS"/>
    <property type="match status" value="1"/>
</dbReference>
<dbReference type="SMART" id="SM00823">
    <property type="entry name" value="PKS_PP"/>
    <property type="match status" value="1"/>
</dbReference>
<dbReference type="SMART" id="SM01294">
    <property type="entry name" value="PKS_PP_betabranch"/>
    <property type="match status" value="1"/>
</dbReference>
<dbReference type="SUPFAM" id="SSF47336">
    <property type="entry name" value="ACP-like"/>
    <property type="match status" value="1"/>
</dbReference>
<dbReference type="SUPFAM" id="SSF52151">
    <property type="entry name" value="FabD/lysophospholipase-like"/>
    <property type="match status" value="1"/>
</dbReference>
<dbReference type="SUPFAM" id="SSF51735">
    <property type="entry name" value="NAD(P)-binding Rossmann-fold domains"/>
    <property type="match status" value="2"/>
</dbReference>
<dbReference type="SUPFAM" id="SSF55048">
    <property type="entry name" value="Probable ACP-binding domain of malonyl-CoA ACP transacylase"/>
    <property type="match status" value="1"/>
</dbReference>
<dbReference type="SUPFAM" id="SSF53901">
    <property type="entry name" value="Thiolase-like"/>
    <property type="match status" value="1"/>
</dbReference>
<dbReference type="PROSITE" id="PS50075">
    <property type="entry name" value="CARRIER"/>
    <property type="match status" value="1"/>
</dbReference>
<dbReference type="PROSITE" id="PS00606">
    <property type="entry name" value="KS3_1"/>
    <property type="match status" value="1"/>
</dbReference>
<dbReference type="PROSITE" id="PS52004">
    <property type="entry name" value="KS3_2"/>
    <property type="match status" value="1"/>
</dbReference>
<dbReference type="PROSITE" id="PS00012">
    <property type="entry name" value="PHOSPHOPANTETHEINE"/>
    <property type="match status" value="1"/>
</dbReference>
<dbReference type="PROSITE" id="PS52019">
    <property type="entry name" value="PKS_MFAS_DH"/>
    <property type="match status" value="1"/>
</dbReference>
<feature type="chain" id="PRO_0000180292" description="6-methylsalicylic acid synthase">
    <location>
        <begin position="1"/>
        <end position="1774"/>
    </location>
</feature>
<feature type="domain" description="Ketosynthase family 3 (KS3)" evidence="3">
    <location>
        <begin position="32"/>
        <end position="457"/>
    </location>
</feature>
<feature type="domain" description="PKS/mFAS DH" evidence="4">
    <location>
        <begin position="926"/>
        <end position="1202"/>
    </location>
</feature>
<feature type="domain" description="Carrier" evidence="2">
    <location>
        <begin position="1698"/>
        <end position="1772"/>
    </location>
</feature>
<feature type="region of interest" description="Disordered" evidence="6">
    <location>
        <begin position="1"/>
        <end position="21"/>
    </location>
</feature>
<feature type="region of interest" description="Acyltransferase">
    <location>
        <begin position="186"/>
        <end position="238"/>
    </location>
</feature>
<feature type="region of interest" description="Acetyl/malonyl transferases">
    <location>
        <begin position="642"/>
        <end position="676"/>
    </location>
</feature>
<feature type="region of interest" description="N-terminal hotdog fold" evidence="4">
    <location>
        <begin position="926"/>
        <end position="1045"/>
    </location>
</feature>
<feature type="region of interest" description="C-terminal hotdog fold" evidence="4">
    <location>
        <begin position="1059"/>
        <end position="1202"/>
    </location>
</feature>
<feature type="region of interest" description="2-oxoacyl reductase">
    <location>
        <begin position="1403"/>
        <end position="1450"/>
    </location>
</feature>
<feature type="compositionally biased region" description="Polar residues" evidence="6">
    <location>
        <begin position="1"/>
        <end position="14"/>
    </location>
</feature>
<feature type="active site" description="For beta-ketoacyl synthase activity" evidence="3">
    <location>
        <position position="204"/>
    </location>
</feature>
<feature type="active site" description="For beta-ketoacyl synthase activity" evidence="3">
    <location>
        <position position="339"/>
    </location>
</feature>
<feature type="active site" description="For beta-ketoacyl synthase activity" evidence="3">
    <location>
        <position position="379"/>
    </location>
</feature>
<feature type="active site" description="For malonyltransferase activity" evidence="5">
    <location>
        <position position="653"/>
    </location>
</feature>
<feature type="active site" description="Proton acceptor; for dehydratase activity" evidence="4">
    <location>
        <position position="958"/>
    </location>
</feature>
<feature type="active site" description="Proton donor; for dehydratase activity" evidence="4">
    <location>
        <position position="1123"/>
    </location>
</feature>
<feature type="binding site" evidence="1">
    <location>
        <begin position="1419"/>
        <end position="1424"/>
    </location>
    <ligand>
        <name>NADP(+)</name>
        <dbReference type="ChEBI" id="CHEBI:58349"/>
    </ligand>
</feature>
<feature type="modified residue" description="O-(pantetheine 4'-phosphoryl)serine" evidence="2">
    <location>
        <position position="1732"/>
    </location>
</feature>
<comment type="function">
    <text>This multifunctional enzyme is a polyketide synthase. It catalyzes a total of 11 steps by seven different component enzymes, in the biosynthesis of the antibiotic patulin.</text>
</comment>
<comment type="catalytic activity">
    <reaction>
        <text>3 malonyl-CoA + acetyl-CoA + NADPH + 3 H(+) = 6-methylsalicylate + 3 CO2 + NADP(+) + 4 CoA + H2O</text>
        <dbReference type="Rhea" id="RHEA:12240"/>
        <dbReference type="ChEBI" id="CHEBI:15377"/>
        <dbReference type="ChEBI" id="CHEBI:15378"/>
        <dbReference type="ChEBI" id="CHEBI:16526"/>
        <dbReference type="ChEBI" id="CHEBI:36658"/>
        <dbReference type="ChEBI" id="CHEBI:57287"/>
        <dbReference type="ChEBI" id="CHEBI:57288"/>
        <dbReference type="ChEBI" id="CHEBI:57384"/>
        <dbReference type="ChEBI" id="CHEBI:57783"/>
        <dbReference type="ChEBI" id="CHEBI:58349"/>
        <dbReference type="EC" id="2.3.1.165"/>
    </reaction>
</comment>
<comment type="pathway">
    <text>Mycotoxin biosynthesis; patulin biosynthesis.</text>
</comment>
<comment type="subunit">
    <text>Homomultimer.</text>
</comment>
<comment type="induction">
    <text>In the late logarithmic growth phase.</text>
</comment>
<name>MSAS_PENPA</name>
<reference key="1">
    <citation type="journal article" date="1990" name="Eur. J. Biochem.">
        <title>The multifunctional 6-methylsalicylic acid synthase gene of Penicillium patulum. Its gene structure relative to that of other polyketide synthases.</title>
        <authorList>
            <person name="Beck J."/>
            <person name="Ripka S."/>
            <person name="Siegner A."/>
            <person name="Schiltz E."/>
            <person name="Schweizer E."/>
        </authorList>
    </citation>
    <scope>NUCLEOTIDE SEQUENCE [GENOMIC DNA]</scope>
    <scope>PARTIAL PROTEIN SEQUENCE</scope>
    <source>
        <strain>DSM 62862 / 11829</strain>
    </source>
</reference>
<evidence type="ECO:0000255" key="1"/>
<evidence type="ECO:0000255" key="2">
    <source>
        <dbReference type="PROSITE-ProRule" id="PRU00258"/>
    </source>
</evidence>
<evidence type="ECO:0000255" key="3">
    <source>
        <dbReference type="PROSITE-ProRule" id="PRU01348"/>
    </source>
</evidence>
<evidence type="ECO:0000255" key="4">
    <source>
        <dbReference type="PROSITE-ProRule" id="PRU01363"/>
    </source>
</evidence>
<evidence type="ECO:0000255" key="5">
    <source>
        <dbReference type="PROSITE-ProRule" id="PRU10022"/>
    </source>
</evidence>
<evidence type="ECO:0000256" key="6">
    <source>
        <dbReference type="SAM" id="MobiDB-lite"/>
    </source>
</evidence>
<sequence>MHSAATSTYPSGKTSPAPVGTPGTEYSEYEFSNDVAVVGMACRVAGGNHNPELLWQSLLSQKSAMGEIPPMRWEPYYRRDARNEKFLKNTTSRGYFLDRLEDFDCQFFGISPKEAEQMDPQQRVSLEVASEALEDAGIPAKSLSGSDTAVFWGVNSDDYSKLVLEDLPNVEAWMGIGTAYCGVPNRISYHLNLMGPSTAVDAACASSLVAIHHGVQAIRLGESKVAIVGGVNALCGPGLTRVLDKAGAISSDGSCKSFDDDAHGYARGEGAGALVLKSLHRALLDHDNVLAVIKGSAVCQDGKTNGIMAPNSVAQQLAANNALSAANIDPHTVRYVEAHATSTPLGDPTEISAIASVYGADRPADDPCYIGSIKPNIGHLEAGAGVMGFIKAVLAIQKGVLPPQANLTKLNSRIDWKTAGVKVVQEATPWPESDPIRRAGVCSYGYGGTVSHAVIEEFSPILQPDPLGNGAVSGPGLLLLSGPQEKRLALQAKTLRDWMTAEGKDHNLSDILTTLATRRDHHDYRAALVVDDYRDAEQVLQSLANGVDHTFTTQSRVLGSDISKDVVWVFSGHGAQWPDMGKQLIHNPVFFAAIQPLDELIQAEIGLSPIELLRTGDFESSDRVQILTYVMQIGLSALLQSNGITPQAVIGHSVGEIAASVVAGALSPAEGALIVTRRALLYRQVMGKGGMILVNLPSAETEEILGSRSDLVVAIDSSPSSCVVAGDKELVAETAEALKARGVKTFTVKSDIAFHSPTLNGLVDPLRDVLAETLSPVSPNVKLYSTALADPRGQDLRDVEYWAGNMVNRVRLTSAVKAAVEDGYRLFLEVSTHPVVSHSINETLMDAGMEDFAVIPTLLRKKPTEKHILHSIAQLHCRGAEVNWAAQMPGRWATGVPTTTWMHKPIWRKIETAPLHTGLTHDVEKHTLLGQRIPVPGTDTYVYTTRLDNDTKPFPGSHPLHGTEIVPAAGLINTFLKGTGGQMLQNVVLRVPVAINAPRSVQVVVQQDQVKVVSRLIPSEPSQLDDDASWVTHTTAYWDRKVAGSEDRIDFAAVKSRLVTKLADNFSIDYLDKVGVSAMGFPWAVTEHYRNDKEMLARVDVNPAISGDAPLPWDSSSWAPVLDAATSVGSTIFPTPALRMPAQIERVEVFTSQDPPKISWLYVQEASDSVPTSHVSVVSEAGEVLAKFTAMRFSEIEGTPGVSGSMESLVHQIAWPPATPAEEPLSIETVILVSPDATTRALYAASLPTRVNSFQFSSTQEFFSNASSLPLEKGTVVTYIPGEVASLAEVPAASESFTWNLLELIKFTVNGSLPIKVFTLTANIGEGQTPTALAQSPLYGLARVIASEHPDLGTLIDVEEPVIPLSTMRYIQGADIIRINDGIARTSRFRSLPRNKLLPASEGPRLLPRPEGTYLITGGLGVLGLEVADFLVEKGARRLLLISRRALPPRRTWDQVSEDLQPTIAKIRLLESRGASVHVLPLDITKPDAVEQLTTALDRLSLPSVQGVVHAAGVLDNELVMQTTRDAFNRVLAPKIAGALALHEVFPPKSVDFFVMFSSCGNLVGFTGQASYGSGNAFLDTLATHRARLGDAAVSFQWTSWRGLGMGASTDFINAELESKGITDVTRDEAFAAWQHLAKYDMDHGVVLRSRAFEDGEPIPVSILNDIAVRRVGTVSNTSPAAAGSSDAVPTSGPELKAYLDEKIRGCVAKVLQMTAEDVDSKAALADLGVDSVMTVTLRRQLQLTLKIAVPPTLTWSHPTVSHLAVWFAEKLAK</sequence>
<keyword id="KW-0045">Antibiotic biosynthesis</keyword>
<keyword id="KW-0903">Direct protein sequencing</keyword>
<keyword id="KW-0511">Multifunctional enzyme</keyword>
<keyword id="KW-0521">NADP</keyword>
<keyword id="KW-0596">Phosphopantetheine</keyword>
<keyword id="KW-0597">Phosphoprotein</keyword>
<keyword id="KW-0808">Transferase</keyword>
<proteinExistence type="evidence at protein level"/>